<gene>
    <name evidence="1" type="primary">rsgA</name>
    <name type="ordered locus">MAG2130</name>
</gene>
<accession>A5IY02</accession>
<organism>
    <name type="scientific">Mycoplasmopsis agalactiae (strain NCTC 10123 / CIP 59.7 / PG2)</name>
    <name type="common">Mycoplasma agalactiae</name>
    <dbReference type="NCBI Taxonomy" id="347257"/>
    <lineage>
        <taxon>Bacteria</taxon>
        <taxon>Bacillati</taxon>
        <taxon>Mycoplasmatota</taxon>
        <taxon>Mycoplasmoidales</taxon>
        <taxon>Metamycoplasmataceae</taxon>
        <taxon>Mycoplasmopsis</taxon>
    </lineage>
</organism>
<proteinExistence type="inferred from homology"/>
<keyword id="KW-0963">Cytoplasm</keyword>
<keyword id="KW-0342">GTP-binding</keyword>
<keyword id="KW-0378">Hydrolase</keyword>
<keyword id="KW-0479">Metal-binding</keyword>
<keyword id="KW-0547">Nucleotide-binding</keyword>
<keyword id="KW-1185">Reference proteome</keyword>
<keyword id="KW-0690">Ribosome biogenesis</keyword>
<keyword id="KW-0694">RNA-binding</keyword>
<keyword id="KW-0699">rRNA-binding</keyword>
<keyword id="KW-0862">Zinc</keyword>
<dbReference type="EC" id="3.6.1.-" evidence="1"/>
<dbReference type="EMBL" id="CU179680">
    <property type="protein sequence ID" value="CAL58911.1"/>
    <property type="molecule type" value="Genomic_DNA"/>
</dbReference>
<dbReference type="RefSeq" id="WP_011949392.1">
    <property type="nucleotide sequence ID" value="NC_009497.1"/>
</dbReference>
<dbReference type="SMR" id="A5IY02"/>
<dbReference type="STRING" id="347257.MAG2130"/>
<dbReference type="GeneID" id="93357971"/>
<dbReference type="KEGG" id="maa:MAG2130"/>
<dbReference type="HOGENOM" id="CLU_033617_2_1_14"/>
<dbReference type="Proteomes" id="UP000007065">
    <property type="component" value="Chromosome"/>
</dbReference>
<dbReference type="GO" id="GO:0005737">
    <property type="term" value="C:cytoplasm"/>
    <property type="evidence" value="ECO:0007669"/>
    <property type="project" value="UniProtKB-SubCell"/>
</dbReference>
<dbReference type="GO" id="GO:0005525">
    <property type="term" value="F:GTP binding"/>
    <property type="evidence" value="ECO:0007669"/>
    <property type="project" value="UniProtKB-UniRule"/>
</dbReference>
<dbReference type="GO" id="GO:0003924">
    <property type="term" value="F:GTPase activity"/>
    <property type="evidence" value="ECO:0007669"/>
    <property type="project" value="UniProtKB-UniRule"/>
</dbReference>
<dbReference type="GO" id="GO:0046872">
    <property type="term" value="F:metal ion binding"/>
    <property type="evidence" value="ECO:0007669"/>
    <property type="project" value="UniProtKB-KW"/>
</dbReference>
<dbReference type="GO" id="GO:0019843">
    <property type="term" value="F:rRNA binding"/>
    <property type="evidence" value="ECO:0007669"/>
    <property type="project" value="UniProtKB-KW"/>
</dbReference>
<dbReference type="GO" id="GO:0042274">
    <property type="term" value="P:ribosomal small subunit biogenesis"/>
    <property type="evidence" value="ECO:0007669"/>
    <property type="project" value="UniProtKB-UniRule"/>
</dbReference>
<dbReference type="CDD" id="cd01854">
    <property type="entry name" value="YjeQ_EngC"/>
    <property type="match status" value="1"/>
</dbReference>
<dbReference type="Gene3D" id="2.40.50.140">
    <property type="entry name" value="Nucleic acid-binding proteins"/>
    <property type="match status" value="1"/>
</dbReference>
<dbReference type="Gene3D" id="3.40.50.300">
    <property type="entry name" value="P-loop containing nucleotide triphosphate hydrolases"/>
    <property type="match status" value="1"/>
</dbReference>
<dbReference type="Gene3D" id="1.10.40.50">
    <property type="entry name" value="Probable gtpase engc, domain 3"/>
    <property type="match status" value="1"/>
</dbReference>
<dbReference type="HAMAP" id="MF_01820">
    <property type="entry name" value="GTPase_RsgA"/>
    <property type="match status" value="1"/>
</dbReference>
<dbReference type="InterPro" id="IPR030378">
    <property type="entry name" value="G_CP_dom"/>
</dbReference>
<dbReference type="InterPro" id="IPR012340">
    <property type="entry name" value="NA-bd_OB-fold"/>
</dbReference>
<dbReference type="InterPro" id="IPR027417">
    <property type="entry name" value="P-loop_NTPase"/>
</dbReference>
<dbReference type="InterPro" id="IPR004881">
    <property type="entry name" value="Ribosome_biogen_GTPase_RsgA"/>
</dbReference>
<dbReference type="InterPro" id="IPR010914">
    <property type="entry name" value="RsgA_GTPase_dom"/>
</dbReference>
<dbReference type="InterPro" id="IPR031944">
    <property type="entry name" value="RsgA_N"/>
</dbReference>
<dbReference type="NCBIfam" id="TIGR00157">
    <property type="entry name" value="ribosome small subunit-dependent GTPase A"/>
    <property type="match status" value="1"/>
</dbReference>
<dbReference type="PANTHER" id="PTHR32120">
    <property type="entry name" value="SMALL RIBOSOMAL SUBUNIT BIOGENESIS GTPASE RSGA"/>
    <property type="match status" value="1"/>
</dbReference>
<dbReference type="PANTHER" id="PTHR32120:SF11">
    <property type="entry name" value="SMALL RIBOSOMAL SUBUNIT BIOGENESIS GTPASE RSGA 1, MITOCHONDRIAL-RELATED"/>
    <property type="match status" value="1"/>
</dbReference>
<dbReference type="Pfam" id="PF03193">
    <property type="entry name" value="RsgA_GTPase"/>
    <property type="match status" value="1"/>
</dbReference>
<dbReference type="Pfam" id="PF16745">
    <property type="entry name" value="RsgA_N"/>
    <property type="match status" value="1"/>
</dbReference>
<dbReference type="SUPFAM" id="SSF50249">
    <property type="entry name" value="Nucleic acid-binding proteins"/>
    <property type="match status" value="1"/>
</dbReference>
<dbReference type="SUPFAM" id="SSF52540">
    <property type="entry name" value="P-loop containing nucleoside triphosphate hydrolases"/>
    <property type="match status" value="1"/>
</dbReference>
<dbReference type="PROSITE" id="PS50936">
    <property type="entry name" value="ENGC_GTPASE"/>
    <property type="match status" value="1"/>
</dbReference>
<dbReference type="PROSITE" id="PS51721">
    <property type="entry name" value="G_CP"/>
    <property type="match status" value="1"/>
</dbReference>
<reference key="1">
    <citation type="journal article" date="2007" name="PLoS Genet.">
        <title>Being pathogenic, plastic, and sexual while living with a nearly minimal bacterial genome.</title>
        <authorList>
            <person name="Sirand-Pugnet P."/>
            <person name="Lartigue C."/>
            <person name="Marenda M."/>
            <person name="Jacob D."/>
            <person name="Barre A."/>
            <person name="Barbe V."/>
            <person name="Schenowitz C."/>
            <person name="Mangenot S."/>
            <person name="Couloux A."/>
            <person name="Segurens B."/>
            <person name="de Daruvar A."/>
            <person name="Blanchard A."/>
            <person name="Citti C."/>
        </authorList>
    </citation>
    <scope>NUCLEOTIDE SEQUENCE [LARGE SCALE GENOMIC DNA]</scope>
    <source>
        <strain>NCTC 10123 / CIP 59.7 / PG2</strain>
    </source>
</reference>
<name>RSGA_MYCAP</name>
<sequence>MKGKIYSINSGIYSIKDENNNFHNLPALGVFRHKNIVPLVGDYVEFEKEKYITKIYERQNEFIRPKVANIDHIIIVMSIHEPEFQSFLVDKYMAFIESANIEPVLFNTKADLGTSKYKNEYESLGYKVYEISYKTDEWVKNIAKLFTNKTNVLMGQSGVGKTTLVNKITGSNFAVQAISKFANRGKHTTRIVQIVNVFDNGELIDTPGFSSLDINLTKQQLAYSYKQFKELGKFCKFKTCFHQNEPENFCNIKQAVKDNIIPQFRYNNYLKLLQEVENEQK</sequence>
<feature type="chain" id="PRO_1000188102" description="Small ribosomal subunit biogenesis GTPase RsgA">
    <location>
        <begin position="1"/>
        <end position="281"/>
    </location>
</feature>
<feature type="domain" description="CP-type G" evidence="2">
    <location>
        <begin position="59"/>
        <end position="212"/>
    </location>
</feature>
<feature type="binding site" evidence="1">
    <location>
        <begin position="108"/>
        <end position="111"/>
    </location>
    <ligand>
        <name>GTP</name>
        <dbReference type="ChEBI" id="CHEBI:37565"/>
    </ligand>
</feature>
<feature type="binding site" evidence="1">
    <location>
        <begin position="155"/>
        <end position="163"/>
    </location>
    <ligand>
        <name>GTP</name>
        <dbReference type="ChEBI" id="CHEBI:37565"/>
    </ligand>
</feature>
<feature type="binding site" evidence="1">
    <location>
        <position position="235"/>
    </location>
    <ligand>
        <name>Zn(2+)</name>
        <dbReference type="ChEBI" id="CHEBI:29105"/>
    </ligand>
</feature>
<feature type="binding site" evidence="1">
    <location>
        <position position="240"/>
    </location>
    <ligand>
        <name>Zn(2+)</name>
        <dbReference type="ChEBI" id="CHEBI:29105"/>
    </ligand>
</feature>
<feature type="binding site" evidence="1">
    <location>
        <position position="242"/>
    </location>
    <ligand>
        <name>Zn(2+)</name>
        <dbReference type="ChEBI" id="CHEBI:29105"/>
    </ligand>
</feature>
<feature type="binding site" evidence="1">
    <location>
        <position position="250"/>
    </location>
    <ligand>
        <name>Zn(2+)</name>
        <dbReference type="ChEBI" id="CHEBI:29105"/>
    </ligand>
</feature>
<comment type="function">
    <text evidence="1">One of several proteins that assist in the late maturation steps of the functional core of the 30S ribosomal subunit. Helps release RbfA from mature subunits. May play a role in the assembly of ribosomal proteins into the subunit. Circularly permuted GTPase that catalyzes slow GTP hydrolysis, GTPase activity is stimulated by the 30S ribosomal subunit.</text>
</comment>
<comment type="cofactor">
    <cofactor evidence="1">
        <name>Zn(2+)</name>
        <dbReference type="ChEBI" id="CHEBI:29105"/>
    </cofactor>
    <text evidence="1">Binds 1 zinc ion per subunit.</text>
</comment>
<comment type="subunit">
    <text evidence="1">Monomer. Associates with 30S ribosomal subunit, binds 16S rRNA.</text>
</comment>
<comment type="subcellular location">
    <subcellularLocation>
        <location evidence="1">Cytoplasm</location>
    </subcellularLocation>
</comment>
<comment type="similarity">
    <text evidence="1">Belongs to the TRAFAC class YlqF/YawG GTPase family. RsgA subfamily.</text>
</comment>
<protein>
    <recommendedName>
        <fullName evidence="1">Small ribosomal subunit biogenesis GTPase RsgA</fullName>
        <ecNumber evidence="1">3.6.1.-</ecNumber>
    </recommendedName>
</protein>
<evidence type="ECO:0000255" key="1">
    <source>
        <dbReference type="HAMAP-Rule" id="MF_01820"/>
    </source>
</evidence>
<evidence type="ECO:0000255" key="2">
    <source>
        <dbReference type="PROSITE-ProRule" id="PRU01058"/>
    </source>
</evidence>